<reference key="1">
    <citation type="submission" date="2007-10" db="EMBL/GenBank/DDBJ databases">
        <title>Complete sequence of Methanococcus maripaludis C6.</title>
        <authorList>
            <consortium name="US DOE Joint Genome Institute"/>
            <person name="Copeland A."/>
            <person name="Lucas S."/>
            <person name="Lapidus A."/>
            <person name="Barry K."/>
            <person name="Glavina del Rio T."/>
            <person name="Dalin E."/>
            <person name="Tice H."/>
            <person name="Pitluck S."/>
            <person name="Clum A."/>
            <person name="Schmutz J."/>
            <person name="Larimer F."/>
            <person name="Land M."/>
            <person name="Hauser L."/>
            <person name="Kyrpides N."/>
            <person name="Mikhailova N."/>
            <person name="Sieprawska-Lupa M."/>
            <person name="Whitman W.B."/>
            <person name="Richardson P."/>
        </authorList>
    </citation>
    <scope>NUCLEOTIDE SEQUENCE [LARGE SCALE GENOMIC DNA]</scope>
    <source>
        <strain>C6 / ATCC BAA-1332</strain>
    </source>
</reference>
<dbReference type="EC" id="2.8.1.6" evidence="1"/>
<dbReference type="EMBL" id="CP000867">
    <property type="protein sequence ID" value="ABX02248.1"/>
    <property type="molecule type" value="Genomic_DNA"/>
</dbReference>
<dbReference type="SMR" id="A9AA75"/>
<dbReference type="STRING" id="444158.MmarC6_1435"/>
<dbReference type="KEGG" id="mmx:MmarC6_1435"/>
<dbReference type="eggNOG" id="arCOG00658">
    <property type="taxonomic scope" value="Archaea"/>
</dbReference>
<dbReference type="HOGENOM" id="CLU_033172_2_1_2"/>
<dbReference type="OrthoDB" id="9264at2157"/>
<dbReference type="PhylomeDB" id="A9AA75"/>
<dbReference type="UniPathway" id="UPA00078">
    <property type="reaction ID" value="UER00162"/>
</dbReference>
<dbReference type="GO" id="GO:0051537">
    <property type="term" value="F:2 iron, 2 sulfur cluster binding"/>
    <property type="evidence" value="ECO:0007669"/>
    <property type="project" value="UniProtKB-KW"/>
</dbReference>
<dbReference type="GO" id="GO:0051539">
    <property type="term" value="F:4 iron, 4 sulfur cluster binding"/>
    <property type="evidence" value="ECO:0007669"/>
    <property type="project" value="UniProtKB-KW"/>
</dbReference>
<dbReference type="GO" id="GO:0004076">
    <property type="term" value="F:biotin synthase activity"/>
    <property type="evidence" value="ECO:0007669"/>
    <property type="project" value="UniProtKB-UniRule"/>
</dbReference>
<dbReference type="GO" id="GO:0005506">
    <property type="term" value="F:iron ion binding"/>
    <property type="evidence" value="ECO:0007669"/>
    <property type="project" value="UniProtKB-UniRule"/>
</dbReference>
<dbReference type="GO" id="GO:0009102">
    <property type="term" value="P:biotin biosynthetic process"/>
    <property type="evidence" value="ECO:0007669"/>
    <property type="project" value="UniProtKB-UniRule"/>
</dbReference>
<dbReference type="CDD" id="cd01335">
    <property type="entry name" value="Radical_SAM"/>
    <property type="match status" value="1"/>
</dbReference>
<dbReference type="FunFam" id="3.20.20.70:FF:000605">
    <property type="match status" value="1"/>
</dbReference>
<dbReference type="Gene3D" id="3.20.20.70">
    <property type="entry name" value="Aldolase class I"/>
    <property type="match status" value="1"/>
</dbReference>
<dbReference type="HAMAP" id="MF_01694">
    <property type="entry name" value="BioB"/>
    <property type="match status" value="1"/>
</dbReference>
<dbReference type="InterPro" id="IPR013785">
    <property type="entry name" value="Aldolase_TIM"/>
</dbReference>
<dbReference type="InterPro" id="IPR010722">
    <property type="entry name" value="BATS_dom"/>
</dbReference>
<dbReference type="InterPro" id="IPR002684">
    <property type="entry name" value="Biotin_synth/BioAB"/>
</dbReference>
<dbReference type="InterPro" id="IPR024177">
    <property type="entry name" value="Biotin_synthase"/>
</dbReference>
<dbReference type="InterPro" id="IPR006638">
    <property type="entry name" value="Elp3/MiaA/NifB-like_rSAM"/>
</dbReference>
<dbReference type="InterPro" id="IPR007197">
    <property type="entry name" value="rSAM"/>
</dbReference>
<dbReference type="NCBIfam" id="TIGR00433">
    <property type="entry name" value="bioB"/>
    <property type="match status" value="1"/>
</dbReference>
<dbReference type="PANTHER" id="PTHR22976">
    <property type="entry name" value="BIOTIN SYNTHASE"/>
    <property type="match status" value="1"/>
</dbReference>
<dbReference type="PANTHER" id="PTHR22976:SF2">
    <property type="entry name" value="BIOTIN SYNTHASE, MITOCHONDRIAL"/>
    <property type="match status" value="1"/>
</dbReference>
<dbReference type="Pfam" id="PF06968">
    <property type="entry name" value="BATS"/>
    <property type="match status" value="1"/>
</dbReference>
<dbReference type="Pfam" id="PF04055">
    <property type="entry name" value="Radical_SAM"/>
    <property type="match status" value="1"/>
</dbReference>
<dbReference type="PIRSF" id="PIRSF001619">
    <property type="entry name" value="Biotin_synth"/>
    <property type="match status" value="1"/>
</dbReference>
<dbReference type="SFLD" id="SFLDG01060">
    <property type="entry name" value="BATS_domain_containing"/>
    <property type="match status" value="1"/>
</dbReference>
<dbReference type="SFLD" id="SFLDG01278">
    <property type="entry name" value="biotin_synthase_like"/>
    <property type="match status" value="1"/>
</dbReference>
<dbReference type="SMART" id="SM00876">
    <property type="entry name" value="BATS"/>
    <property type="match status" value="1"/>
</dbReference>
<dbReference type="SMART" id="SM00729">
    <property type="entry name" value="Elp3"/>
    <property type="match status" value="1"/>
</dbReference>
<dbReference type="SUPFAM" id="SSF102114">
    <property type="entry name" value="Radical SAM enzymes"/>
    <property type="match status" value="1"/>
</dbReference>
<dbReference type="PROSITE" id="PS51918">
    <property type="entry name" value="RADICAL_SAM"/>
    <property type="match status" value="1"/>
</dbReference>
<comment type="function">
    <text evidence="1">Catalyzes the conversion of dethiobiotin (DTB) to biotin by the insertion of a sulfur atom into dethiobiotin via a radical-based mechanism.</text>
</comment>
<comment type="catalytic activity">
    <reaction evidence="1">
        <text>(4R,5S)-dethiobiotin + (sulfur carrier)-SH + 2 reduced [2Fe-2S]-[ferredoxin] + 2 S-adenosyl-L-methionine = (sulfur carrier)-H + biotin + 2 5'-deoxyadenosine + 2 L-methionine + 2 oxidized [2Fe-2S]-[ferredoxin]</text>
        <dbReference type="Rhea" id="RHEA:22060"/>
        <dbReference type="Rhea" id="RHEA-COMP:10000"/>
        <dbReference type="Rhea" id="RHEA-COMP:10001"/>
        <dbReference type="Rhea" id="RHEA-COMP:14737"/>
        <dbReference type="Rhea" id="RHEA-COMP:14739"/>
        <dbReference type="ChEBI" id="CHEBI:17319"/>
        <dbReference type="ChEBI" id="CHEBI:29917"/>
        <dbReference type="ChEBI" id="CHEBI:33737"/>
        <dbReference type="ChEBI" id="CHEBI:33738"/>
        <dbReference type="ChEBI" id="CHEBI:57586"/>
        <dbReference type="ChEBI" id="CHEBI:57844"/>
        <dbReference type="ChEBI" id="CHEBI:59789"/>
        <dbReference type="ChEBI" id="CHEBI:64428"/>
        <dbReference type="ChEBI" id="CHEBI:149473"/>
        <dbReference type="EC" id="2.8.1.6"/>
    </reaction>
</comment>
<comment type="cofactor">
    <cofactor evidence="1">
        <name>[4Fe-4S] cluster</name>
        <dbReference type="ChEBI" id="CHEBI:49883"/>
    </cofactor>
    <text evidence="1">Binds 1 [4Fe-4S] cluster. The cluster is coordinated with 3 cysteines and an exchangeable S-adenosyl-L-methionine.</text>
</comment>
<comment type="cofactor">
    <cofactor evidence="1">
        <name>[2Fe-2S] cluster</name>
        <dbReference type="ChEBI" id="CHEBI:190135"/>
    </cofactor>
    <text evidence="1">Binds 1 [2Fe-2S] cluster. The cluster is coordinated with 3 cysteines and 1 arginine.</text>
</comment>
<comment type="pathway">
    <text evidence="1">Cofactor biosynthesis; biotin biosynthesis; biotin from 7,8-diaminononanoate: step 2/2.</text>
</comment>
<comment type="subunit">
    <text evidence="1">Homodimer.</text>
</comment>
<comment type="similarity">
    <text evidence="1">Belongs to the radical SAM superfamily. Biotin synthase family.</text>
</comment>
<accession>A9AA75</accession>
<gene>
    <name evidence="1" type="primary">bioB</name>
    <name type="ordered locus">MmarC6_1435</name>
</gene>
<keyword id="KW-0001">2Fe-2S</keyword>
<keyword id="KW-0004">4Fe-4S</keyword>
<keyword id="KW-0093">Biotin biosynthesis</keyword>
<keyword id="KW-0408">Iron</keyword>
<keyword id="KW-0411">Iron-sulfur</keyword>
<keyword id="KW-0479">Metal-binding</keyword>
<keyword id="KW-0949">S-adenosyl-L-methionine</keyword>
<keyword id="KW-0808">Transferase</keyword>
<name>BIOB_METM6</name>
<evidence type="ECO:0000255" key="1">
    <source>
        <dbReference type="HAMAP-Rule" id="MF_01694"/>
    </source>
</evidence>
<evidence type="ECO:0000255" key="2">
    <source>
        <dbReference type="PROSITE-ProRule" id="PRU01266"/>
    </source>
</evidence>
<proteinExistence type="inferred from homology"/>
<organism>
    <name type="scientific">Methanococcus maripaludis (strain C6 / ATCC BAA-1332)</name>
    <dbReference type="NCBI Taxonomy" id="444158"/>
    <lineage>
        <taxon>Archaea</taxon>
        <taxon>Methanobacteriati</taxon>
        <taxon>Methanobacteriota</taxon>
        <taxon>Methanomada group</taxon>
        <taxon>Methanococci</taxon>
        <taxon>Methanococcales</taxon>
        <taxon>Methanococcaceae</taxon>
        <taxon>Methanococcus</taxon>
    </lineage>
</organism>
<protein>
    <recommendedName>
        <fullName evidence="1">Biotin synthase</fullName>
        <ecNumber evidence="1">2.8.1.6</ecNumber>
    </recommendedName>
</protein>
<sequence length="327" mass="37032">MREIKLNPDSLEIYEKSDSGKLNRNDLIDLWNLDLNDLLNISCALKKLFNKDKIDLCSIMNAKSGICPENCIFCSQSKHNTSKIDTYELKSKEEILKNAKSVEKYSNRFSIVVSGKTVTDLEFEKIIESIEEIQNKTKLKVCVSLGLLNKDKLKALKEKNVRIHNNLETSENYFKNICTSHDYNDKVKVILEAKKIGLEMCSGGIFGMGESIEDRVDLFLDLKKLGVDSVALNLLNPIYGTKIYEKIKFGVISPINSIDALKSICIARIALPDKVIRLCGGREHVLKDMQKYSLFALDGLMIGNYLTTNGQNIQSDLKMIKEMGFER</sequence>
<feature type="chain" id="PRO_0000381464" description="Biotin synthase">
    <location>
        <begin position="1"/>
        <end position="327"/>
    </location>
</feature>
<feature type="domain" description="Radical SAM core" evidence="2">
    <location>
        <begin position="49"/>
        <end position="273"/>
    </location>
</feature>
<feature type="binding site" evidence="1">
    <location>
        <position position="67"/>
    </location>
    <ligand>
        <name>[4Fe-4S] cluster</name>
        <dbReference type="ChEBI" id="CHEBI:49883"/>
        <note>4Fe-4S-S-AdoMet</note>
    </ligand>
</feature>
<feature type="binding site" evidence="1">
    <location>
        <position position="71"/>
    </location>
    <ligand>
        <name>[4Fe-4S] cluster</name>
        <dbReference type="ChEBI" id="CHEBI:49883"/>
        <note>4Fe-4S-S-AdoMet</note>
    </ligand>
</feature>
<feature type="binding site" evidence="1">
    <location>
        <position position="74"/>
    </location>
    <ligand>
        <name>[4Fe-4S] cluster</name>
        <dbReference type="ChEBI" id="CHEBI:49883"/>
        <note>4Fe-4S-S-AdoMet</note>
    </ligand>
</feature>
<feature type="binding site" evidence="1">
    <location>
        <position position="110"/>
    </location>
    <ligand>
        <name>[2Fe-2S] cluster</name>
        <dbReference type="ChEBI" id="CHEBI:190135"/>
    </ligand>
</feature>
<feature type="binding site" evidence="1">
    <location>
        <position position="142"/>
    </location>
    <ligand>
        <name>[2Fe-2S] cluster</name>
        <dbReference type="ChEBI" id="CHEBI:190135"/>
    </ligand>
</feature>
<feature type="binding site" evidence="1">
    <location>
        <position position="201"/>
    </location>
    <ligand>
        <name>[2Fe-2S] cluster</name>
        <dbReference type="ChEBI" id="CHEBI:190135"/>
    </ligand>
</feature>
<feature type="binding site" evidence="1">
    <location>
        <position position="277"/>
    </location>
    <ligand>
        <name>[2Fe-2S] cluster</name>
        <dbReference type="ChEBI" id="CHEBI:190135"/>
    </ligand>
</feature>